<protein>
    <recommendedName>
        <fullName evidence="1">UPF0761 membrane protein Ppha_1623</fullName>
    </recommendedName>
</protein>
<reference key="1">
    <citation type="submission" date="2008-06" db="EMBL/GenBank/DDBJ databases">
        <title>Complete sequence of Pelodictyon phaeoclathratiforme BU-1.</title>
        <authorList>
            <consortium name="US DOE Joint Genome Institute"/>
            <person name="Lucas S."/>
            <person name="Copeland A."/>
            <person name="Lapidus A."/>
            <person name="Glavina del Rio T."/>
            <person name="Dalin E."/>
            <person name="Tice H."/>
            <person name="Bruce D."/>
            <person name="Goodwin L."/>
            <person name="Pitluck S."/>
            <person name="Schmutz J."/>
            <person name="Larimer F."/>
            <person name="Land M."/>
            <person name="Hauser L."/>
            <person name="Kyrpides N."/>
            <person name="Mikhailova N."/>
            <person name="Liu Z."/>
            <person name="Li T."/>
            <person name="Zhao F."/>
            <person name="Overmann J."/>
            <person name="Bryant D.A."/>
            <person name="Richardson P."/>
        </authorList>
    </citation>
    <scope>NUCLEOTIDE SEQUENCE [LARGE SCALE GENOMIC DNA]</scope>
    <source>
        <strain>DSM 5477 / BU-1</strain>
    </source>
</reference>
<sequence>MGEKERRGQNPKTESNAVELVSCMRVFIPFFWKNFIHDRIFLGAGSLAFQTLLSIVPILAVILSILNVFVVFTPFKRSLEDFLVQNFMPGAGNVLNHYLTDFIGKTASVPILGGVFLFIIALFLISTVDHTLNEIWEVHAPRKALQGFTLYWTVLTLGPVLIGSSLAASSYVWYMVFTDGPLLELKTRLLSFFPFINSVAAFFLLYMLVPNRRVRFVHAFSGALLAALLFELSKRWFTFYITHIATFEHIYGALSVIPMLFFWVYLGWIVVLTGAEFVFCLGALKPVERIADVFSPLRGVPEILSVLAHIWNGQKSGNAMNMKKMLKVIEGLTPSGLRKVIDILLQNGLLHVTVNGDLAISRDLYTMTLYDLYAIIPSGFWGDENGLLISGGNSVHLKTISKGVTECLKNSMDLPLAPLLEDINQQPE</sequence>
<organism>
    <name type="scientific">Pelodictyon phaeoclathratiforme (strain DSM 5477 / BU-1)</name>
    <dbReference type="NCBI Taxonomy" id="324925"/>
    <lineage>
        <taxon>Bacteria</taxon>
        <taxon>Pseudomonadati</taxon>
        <taxon>Chlorobiota</taxon>
        <taxon>Chlorobiia</taxon>
        <taxon>Chlorobiales</taxon>
        <taxon>Chlorobiaceae</taxon>
        <taxon>Chlorobium/Pelodictyon group</taxon>
        <taxon>Pelodictyon</taxon>
    </lineage>
</organism>
<accession>B4SAH4</accession>
<dbReference type="EMBL" id="CP001110">
    <property type="protein sequence ID" value="ACF43860.1"/>
    <property type="molecule type" value="Genomic_DNA"/>
</dbReference>
<dbReference type="RefSeq" id="WP_012508347.1">
    <property type="nucleotide sequence ID" value="NC_011060.1"/>
</dbReference>
<dbReference type="SMR" id="B4SAH4"/>
<dbReference type="STRING" id="324925.Ppha_1623"/>
<dbReference type="KEGG" id="pph:Ppha_1623"/>
<dbReference type="eggNOG" id="COG1295">
    <property type="taxonomic scope" value="Bacteria"/>
</dbReference>
<dbReference type="HOGENOM" id="CLU_032288_1_0_10"/>
<dbReference type="OrthoDB" id="9808671at2"/>
<dbReference type="Proteomes" id="UP000002724">
    <property type="component" value="Chromosome"/>
</dbReference>
<dbReference type="GO" id="GO:0005886">
    <property type="term" value="C:plasma membrane"/>
    <property type="evidence" value="ECO:0007669"/>
    <property type="project" value="UniProtKB-SubCell"/>
</dbReference>
<dbReference type="HAMAP" id="MF_00672">
    <property type="entry name" value="UPF0761"/>
    <property type="match status" value="1"/>
</dbReference>
<dbReference type="InterPro" id="IPR023679">
    <property type="entry name" value="UPF0761_bac"/>
</dbReference>
<dbReference type="InterPro" id="IPR017039">
    <property type="entry name" value="Virul_fac_BrkB"/>
</dbReference>
<dbReference type="NCBIfam" id="TIGR00765">
    <property type="entry name" value="yihY_not_rbn"/>
    <property type="match status" value="1"/>
</dbReference>
<dbReference type="PANTHER" id="PTHR30213">
    <property type="entry name" value="INNER MEMBRANE PROTEIN YHJD"/>
    <property type="match status" value="1"/>
</dbReference>
<dbReference type="PANTHER" id="PTHR30213:SF0">
    <property type="entry name" value="UPF0761 MEMBRANE PROTEIN YIHY"/>
    <property type="match status" value="1"/>
</dbReference>
<dbReference type="Pfam" id="PF03631">
    <property type="entry name" value="Virul_fac_BrkB"/>
    <property type="match status" value="1"/>
</dbReference>
<feature type="chain" id="PRO_0000391044" description="UPF0761 membrane protein Ppha_1623">
    <location>
        <begin position="1"/>
        <end position="428"/>
    </location>
</feature>
<feature type="transmembrane region" description="Helical" evidence="1">
    <location>
        <begin position="52"/>
        <end position="72"/>
    </location>
</feature>
<feature type="transmembrane region" description="Helical" evidence="1">
    <location>
        <begin position="108"/>
        <end position="128"/>
    </location>
</feature>
<feature type="transmembrane region" description="Helical" evidence="1">
    <location>
        <begin position="148"/>
        <end position="168"/>
    </location>
</feature>
<feature type="transmembrane region" description="Helical" evidence="1">
    <location>
        <begin position="189"/>
        <end position="209"/>
    </location>
</feature>
<feature type="transmembrane region" description="Helical" evidence="1">
    <location>
        <begin position="216"/>
        <end position="233"/>
    </location>
</feature>
<feature type="transmembrane region" description="Helical" evidence="1">
    <location>
        <begin position="252"/>
        <end position="272"/>
    </location>
</feature>
<name>Y1623_PELPB</name>
<gene>
    <name type="ordered locus">Ppha_1623</name>
</gene>
<comment type="subcellular location">
    <subcellularLocation>
        <location evidence="1">Cell inner membrane</location>
        <topology evidence="1">Multi-pass membrane protein</topology>
    </subcellularLocation>
</comment>
<comment type="similarity">
    <text evidence="1">Belongs to the UPF0761 family.</text>
</comment>
<keyword id="KW-0997">Cell inner membrane</keyword>
<keyword id="KW-1003">Cell membrane</keyword>
<keyword id="KW-0472">Membrane</keyword>
<keyword id="KW-1185">Reference proteome</keyword>
<keyword id="KW-0812">Transmembrane</keyword>
<keyword id="KW-1133">Transmembrane helix</keyword>
<proteinExistence type="inferred from homology"/>
<evidence type="ECO:0000255" key="1">
    <source>
        <dbReference type="HAMAP-Rule" id="MF_00672"/>
    </source>
</evidence>